<feature type="chain" id="PRO_0000196273" description="Cruxrhodopsin-1">
    <location>
        <begin position="1"/>
        <end position="250"/>
    </location>
</feature>
<feature type="topological domain" description="Extracellular" evidence="1">
    <location>
        <begin position="1"/>
        <end position="9"/>
    </location>
</feature>
<feature type="transmembrane region" description="Helical; Name=Helix A" evidence="1">
    <location>
        <begin position="10"/>
        <end position="27"/>
    </location>
</feature>
<feature type="topological domain" description="Cytoplasmic" evidence="1">
    <location>
        <begin position="28"/>
        <end position="41"/>
    </location>
</feature>
<feature type="transmembrane region" description="Helical; Name=Helix B" evidence="1">
    <location>
        <begin position="42"/>
        <end position="60"/>
    </location>
</feature>
<feature type="topological domain" description="Extracellular" evidence="1">
    <location>
        <begin position="61"/>
        <end position="77"/>
    </location>
</feature>
<feature type="transmembrane region" description="Helical; Name=Helix C" evidence="1">
    <location>
        <begin position="78"/>
        <end position="94"/>
    </location>
</feature>
<feature type="topological domain" description="Cytoplasmic" evidence="1">
    <location>
        <begin position="95"/>
        <end position="105"/>
    </location>
</feature>
<feature type="transmembrane region" description="Helical; Name=Helix D" evidence="1">
    <location>
        <begin position="106"/>
        <end position="125"/>
    </location>
</feature>
<feature type="topological domain" description="Extracellular" evidence="1">
    <location>
        <begin position="126"/>
        <end position="138"/>
    </location>
</feature>
<feature type="transmembrane region" description="Helical; Name=Helix E" evidence="1">
    <location>
        <begin position="139"/>
        <end position="158"/>
    </location>
</feature>
<feature type="topological domain" description="Cytoplasmic" evidence="1">
    <location>
        <begin position="159"/>
        <end position="176"/>
    </location>
</feature>
<feature type="transmembrane region" description="Helical; Name=Helix F" evidence="1">
    <location>
        <begin position="177"/>
        <end position="195"/>
    </location>
</feature>
<feature type="topological domain" description="Extracellular" evidence="1">
    <location>
        <begin position="196"/>
        <end position="207"/>
    </location>
</feature>
<feature type="transmembrane region" description="Helical; Name=Helix G" evidence="1">
    <location>
        <begin position="208"/>
        <end position="227"/>
    </location>
</feature>
<feature type="topological domain" description="Cytoplasmic" evidence="1">
    <location>
        <begin position="228"/>
        <end position="250"/>
    </location>
</feature>
<feature type="site" description="Primary proton acceptor" evidence="1">
    <location>
        <position position="83"/>
    </location>
</feature>
<feature type="modified residue" description="N6-(retinylidene)lysine" evidence="1">
    <location>
        <position position="220"/>
    </location>
</feature>
<comment type="function">
    <text evidence="2">Light-driven proton pump.</text>
</comment>
<comment type="subunit">
    <text evidence="1">Homotrimer.</text>
</comment>
<comment type="subcellular location">
    <subcellularLocation>
        <location evidence="1">Cell membrane</location>
        <topology evidence="1">Multi-pass membrane protein</topology>
    </subcellularLocation>
</comment>
<comment type="similarity">
    <text evidence="3">Belongs to the archaeal/bacterial/fungal opsin family.</text>
</comment>
<accession>Q57101</accession>
<protein>
    <recommendedName>
        <fullName>Cruxrhodopsin-1</fullName>
        <shortName>COP-1</shortName>
        <shortName>CR-1</shortName>
    </recommendedName>
</protein>
<reference key="1">
    <citation type="journal article" date="1994" name="Arch. Biochem. Biophys.">
        <title>The novel ion pump rhodopsins from Haloarcula form a family independent from both the bacteriorhodopsin and archaerhodopsin families/tribes.</title>
        <authorList>
            <person name="Tateno M."/>
            <person name="Ihara K."/>
            <person name="Mukohata Y."/>
        </authorList>
    </citation>
    <scope>NUCLEOTIDE SEQUENCE [GENOMIC DNA]</scope>
    <scope>PROTEIN SEQUENCE OF 1-10</scope>
</reference>
<evidence type="ECO:0000250" key="1">
    <source>
        <dbReference type="UniProtKB" id="P02945"/>
    </source>
</evidence>
<evidence type="ECO:0000250" key="2">
    <source>
        <dbReference type="UniProtKB" id="Q53496"/>
    </source>
</evidence>
<evidence type="ECO:0000305" key="3"/>
<organism>
    <name type="scientific">Haloarcula argentinensis</name>
    <dbReference type="NCBI Taxonomy" id="43776"/>
    <lineage>
        <taxon>Archaea</taxon>
        <taxon>Methanobacteriati</taxon>
        <taxon>Methanobacteriota</taxon>
        <taxon>Stenosarchaea group</taxon>
        <taxon>Halobacteria</taxon>
        <taxon>Halobacteriales</taxon>
        <taxon>Haloarculaceae</taxon>
        <taxon>Haloarcula</taxon>
    </lineage>
</organism>
<sequence length="250" mass="27010">MPEPGSEAIWLWLGTAGMFLGMLYFIARGWGETDSRRQKFYIATILITAIAFVNYLAMALGFGLTIVEFAGEEHPIYWARYSDWLFTTPLLLYDLGLLAGADRNTITSLVSLDVLMIGTGLVATLSPGSGVLSAGAERLVWWGISTAFLLVLLYFLFSSLSGRVADLPSDTRSTFKTLRNLVTVVWLVYPVWWLIGTEGIGLVGIGIETAGFMVIDLTAKVGFGIILLRSHGVLDGAAETTGTGATPADD</sequence>
<gene>
    <name type="primary">cop1</name>
</gene>
<name>BACR_HALAR</name>
<keyword id="KW-1003">Cell membrane</keyword>
<keyword id="KW-0157">Chromophore</keyword>
<keyword id="KW-0903">Direct protein sequencing</keyword>
<keyword id="KW-0375">Hydrogen ion transport</keyword>
<keyword id="KW-0406">Ion transport</keyword>
<keyword id="KW-0472">Membrane</keyword>
<keyword id="KW-0600">Photoreceptor protein</keyword>
<keyword id="KW-0675">Receptor</keyword>
<keyword id="KW-0681">Retinal protein</keyword>
<keyword id="KW-0716">Sensory transduction</keyword>
<keyword id="KW-0812">Transmembrane</keyword>
<keyword id="KW-1133">Transmembrane helix</keyword>
<keyword id="KW-0813">Transport</keyword>
<proteinExistence type="evidence at protein level"/>
<dbReference type="EMBL" id="D31880">
    <property type="protein sequence ID" value="BAA06678.1"/>
    <property type="molecule type" value="Genomic_DNA"/>
</dbReference>
<dbReference type="SMR" id="Q57101"/>
<dbReference type="GO" id="GO:0005886">
    <property type="term" value="C:plasma membrane"/>
    <property type="evidence" value="ECO:0007669"/>
    <property type="project" value="UniProtKB-SubCell"/>
</dbReference>
<dbReference type="GO" id="GO:0005216">
    <property type="term" value="F:monoatomic ion channel activity"/>
    <property type="evidence" value="ECO:0007669"/>
    <property type="project" value="InterPro"/>
</dbReference>
<dbReference type="GO" id="GO:0009881">
    <property type="term" value="F:photoreceptor activity"/>
    <property type="evidence" value="ECO:0007669"/>
    <property type="project" value="UniProtKB-KW"/>
</dbReference>
<dbReference type="GO" id="GO:0007602">
    <property type="term" value="P:phototransduction"/>
    <property type="evidence" value="ECO:0007669"/>
    <property type="project" value="UniProtKB-KW"/>
</dbReference>
<dbReference type="GO" id="GO:1902600">
    <property type="term" value="P:proton transmembrane transport"/>
    <property type="evidence" value="ECO:0007669"/>
    <property type="project" value="UniProtKB-KW"/>
</dbReference>
<dbReference type="CDD" id="cd15244">
    <property type="entry name" value="7tm_bacteriorhodopsin"/>
    <property type="match status" value="1"/>
</dbReference>
<dbReference type="Gene3D" id="1.20.1070.10">
    <property type="entry name" value="Rhodopsin 7-helix transmembrane proteins"/>
    <property type="match status" value="1"/>
</dbReference>
<dbReference type="InterPro" id="IPR001425">
    <property type="entry name" value="Arc/bac/fun_rhodopsins"/>
</dbReference>
<dbReference type="InterPro" id="IPR018229">
    <property type="entry name" value="Rhodopsin_retinal_BS"/>
</dbReference>
<dbReference type="PANTHER" id="PTHR28286">
    <property type="match status" value="1"/>
</dbReference>
<dbReference type="PANTHER" id="PTHR28286:SF2">
    <property type="entry name" value="BACTERIORHODOPSIN _OPSIN, NOPA (EUROFUNG)"/>
    <property type="match status" value="1"/>
</dbReference>
<dbReference type="Pfam" id="PF01036">
    <property type="entry name" value="Bac_rhodopsin"/>
    <property type="match status" value="1"/>
</dbReference>
<dbReference type="PRINTS" id="PR00251">
    <property type="entry name" value="BACTRLOPSIN"/>
</dbReference>
<dbReference type="SMART" id="SM01021">
    <property type="entry name" value="Bac_rhodopsin"/>
    <property type="match status" value="1"/>
</dbReference>
<dbReference type="SUPFAM" id="SSF81321">
    <property type="entry name" value="Family A G protein-coupled receptor-like"/>
    <property type="match status" value="1"/>
</dbReference>
<dbReference type="PROSITE" id="PS00950">
    <property type="entry name" value="BACTERIAL_OPSIN_1"/>
    <property type="match status" value="1"/>
</dbReference>
<dbReference type="PROSITE" id="PS00327">
    <property type="entry name" value="BACTERIAL_OPSIN_RET"/>
    <property type="match status" value="1"/>
</dbReference>